<gene>
    <name evidence="1" type="primary">gpt</name>
    <name type="ordered locus">VCM66_2200</name>
</gene>
<keyword id="KW-0997">Cell inner membrane</keyword>
<keyword id="KW-1003">Cell membrane</keyword>
<keyword id="KW-0328">Glycosyltransferase</keyword>
<keyword id="KW-0460">Magnesium</keyword>
<keyword id="KW-0472">Membrane</keyword>
<keyword id="KW-0479">Metal-binding</keyword>
<keyword id="KW-0660">Purine salvage</keyword>
<keyword id="KW-0808">Transferase</keyword>
<dbReference type="EC" id="2.4.2.-" evidence="1"/>
<dbReference type="EC" id="2.4.2.22" evidence="1"/>
<dbReference type="EMBL" id="CP001233">
    <property type="protein sequence ID" value="ACP06501.1"/>
    <property type="molecule type" value="Genomic_DNA"/>
</dbReference>
<dbReference type="RefSeq" id="WP_000037415.1">
    <property type="nucleotide sequence ID" value="NC_012578.1"/>
</dbReference>
<dbReference type="SMR" id="C3LQ49"/>
<dbReference type="GeneID" id="94013056"/>
<dbReference type="KEGG" id="vcm:VCM66_2200"/>
<dbReference type="HOGENOM" id="CLU_080904_3_0_6"/>
<dbReference type="UniPathway" id="UPA00602">
    <property type="reaction ID" value="UER00658"/>
</dbReference>
<dbReference type="UniPathway" id="UPA00909">
    <property type="reaction ID" value="UER00887"/>
</dbReference>
<dbReference type="Proteomes" id="UP000001217">
    <property type="component" value="Chromosome I"/>
</dbReference>
<dbReference type="GO" id="GO:0005829">
    <property type="term" value="C:cytosol"/>
    <property type="evidence" value="ECO:0007669"/>
    <property type="project" value="TreeGrafter"/>
</dbReference>
<dbReference type="GO" id="GO:0005886">
    <property type="term" value="C:plasma membrane"/>
    <property type="evidence" value="ECO:0007669"/>
    <property type="project" value="UniProtKB-SubCell"/>
</dbReference>
<dbReference type="GO" id="GO:0052657">
    <property type="term" value="F:guanine phosphoribosyltransferase activity"/>
    <property type="evidence" value="ECO:0007669"/>
    <property type="project" value="RHEA"/>
</dbReference>
<dbReference type="GO" id="GO:0004422">
    <property type="term" value="F:hypoxanthine phosphoribosyltransferase activity"/>
    <property type="evidence" value="ECO:0007669"/>
    <property type="project" value="RHEA"/>
</dbReference>
<dbReference type="GO" id="GO:0000287">
    <property type="term" value="F:magnesium ion binding"/>
    <property type="evidence" value="ECO:0007669"/>
    <property type="project" value="UniProtKB-UniRule"/>
</dbReference>
<dbReference type="GO" id="GO:0000310">
    <property type="term" value="F:xanthine phosphoribosyltransferase activity"/>
    <property type="evidence" value="ECO:0007669"/>
    <property type="project" value="UniProtKB-UniRule"/>
</dbReference>
<dbReference type="GO" id="GO:0032263">
    <property type="term" value="P:GMP salvage"/>
    <property type="evidence" value="ECO:0007669"/>
    <property type="project" value="UniProtKB-UniRule"/>
</dbReference>
<dbReference type="GO" id="GO:0032264">
    <property type="term" value="P:IMP salvage"/>
    <property type="evidence" value="ECO:0007669"/>
    <property type="project" value="TreeGrafter"/>
</dbReference>
<dbReference type="GO" id="GO:0006166">
    <property type="term" value="P:purine ribonucleoside salvage"/>
    <property type="evidence" value="ECO:0007669"/>
    <property type="project" value="UniProtKB-KW"/>
</dbReference>
<dbReference type="GO" id="GO:0032265">
    <property type="term" value="P:XMP salvage"/>
    <property type="evidence" value="ECO:0007669"/>
    <property type="project" value="UniProtKB-UniRule"/>
</dbReference>
<dbReference type="CDD" id="cd06223">
    <property type="entry name" value="PRTases_typeI"/>
    <property type="match status" value="1"/>
</dbReference>
<dbReference type="FunFam" id="3.40.50.2020:FF:000009">
    <property type="entry name" value="Xanthine phosphoribosyltransferase"/>
    <property type="match status" value="1"/>
</dbReference>
<dbReference type="Gene3D" id="3.40.50.2020">
    <property type="match status" value="1"/>
</dbReference>
<dbReference type="HAMAP" id="MF_01903">
    <property type="entry name" value="XGPRT"/>
    <property type="match status" value="1"/>
</dbReference>
<dbReference type="InterPro" id="IPR000836">
    <property type="entry name" value="PRibTrfase_dom"/>
</dbReference>
<dbReference type="InterPro" id="IPR029057">
    <property type="entry name" value="PRTase-like"/>
</dbReference>
<dbReference type="InterPro" id="IPR023747">
    <property type="entry name" value="Xanthine_Guanine_PRibTrfase"/>
</dbReference>
<dbReference type="NCBIfam" id="NF006613">
    <property type="entry name" value="PRK09177.1"/>
    <property type="match status" value="1"/>
</dbReference>
<dbReference type="PANTHER" id="PTHR39563">
    <property type="entry name" value="XANTHINE PHOSPHORIBOSYLTRANSFERASE"/>
    <property type="match status" value="1"/>
</dbReference>
<dbReference type="PANTHER" id="PTHR39563:SF1">
    <property type="entry name" value="XANTHINE-GUANINE PHOSPHORIBOSYLTRANSFERASE"/>
    <property type="match status" value="1"/>
</dbReference>
<dbReference type="Pfam" id="PF00156">
    <property type="entry name" value="Pribosyltran"/>
    <property type="match status" value="1"/>
</dbReference>
<dbReference type="SUPFAM" id="SSF53271">
    <property type="entry name" value="PRTase-like"/>
    <property type="match status" value="1"/>
</dbReference>
<dbReference type="PROSITE" id="PS00103">
    <property type="entry name" value="PUR_PYR_PR_TRANSFER"/>
    <property type="match status" value="1"/>
</dbReference>
<name>XGPT_VIBCM</name>
<sequence>MSKKFVITWDNMQHYCRELAQRQMPAEQWKGILGVSRGGLVPAAILARELGIRYVDTVCISSYDHDHQRDMTVLKAPEHDGEGFLIIDDLVDSGDTARKIREMYPKAKFVTVCAKPAGKDLVDEYVVDIPQDTWIEQPWDMVLSYVEPVNRKQK</sequence>
<organism>
    <name type="scientific">Vibrio cholerae serotype O1 (strain M66-2)</name>
    <dbReference type="NCBI Taxonomy" id="579112"/>
    <lineage>
        <taxon>Bacteria</taxon>
        <taxon>Pseudomonadati</taxon>
        <taxon>Pseudomonadota</taxon>
        <taxon>Gammaproteobacteria</taxon>
        <taxon>Vibrionales</taxon>
        <taxon>Vibrionaceae</taxon>
        <taxon>Vibrio</taxon>
    </lineage>
</organism>
<proteinExistence type="inferred from homology"/>
<comment type="function">
    <text evidence="1">Purine salvage pathway enzyme that catalyzes the transfer of the ribosyl-5-phosphate group from 5-phospho-alpha-D-ribose 1-diphosphate (PRPP) to the N9 position of the 6-oxopurines guanine and xanthine to form the corresponding ribonucleotides GMP (guanosine 5'-monophosphate) and XMP (xanthosine 5'-monophosphate), with the release of PPi. To a lesser extent, also acts on hypoxanthine.</text>
</comment>
<comment type="catalytic activity">
    <reaction evidence="1">
        <text>GMP + diphosphate = guanine + 5-phospho-alpha-D-ribose 1-diphosphate</text>
        <dbReference type="Rhea" id="RHEA:25424"/>
        <dbReference type="ChEBI" id="CHEBI:16235"/>
        <dbReference type="ChEBI" id="CHEBI:33019"/>
        <dbReference type="ChEBI" id="CHEBI:58017"/>
        <dbReference type="ChEBI" id="CHEBI:58115"/>
    </reaction>
    <physiologicalReaction direction="right-to-left" evidence="1">
        <dbReference type="Rhea" id="RHEA:25426"/>
    </physiologicalReaction>
</comment>
<comment type="catalytic activity">
    <reaction evidence="1">
        <text>XMP + diphosphate = xanthine + 5-phospho-alpha-D-ribose 1-diphosphate</text>
        <dbReference type="Rhea" id="RHEA:10800"/>
        <dbReference type="ChEBI" id="CHEBI:17712"/>
        <dbReference type="ChEBI" id="CHEBI:33019"/>
        <dbReference type="ChEBI" id="CHEBI:57464"/>
        <dbReference type="ChEBI" id="CHEBI:58017"/>
        <dbReference type="EC" id="2.4.2.22"/>
    </reaction>
    <physiologicalReaction direction="right-to-left" evidence="1">
        <dbReference type="Rhea" id="RHEA:10802"/>
    </physiologicalReaction>
</comment>
<comment type="catalytic activity">
    <reaction evidence="1">
        <text>IMP + diphosphate = hypoxanthine + 5-phospho-alpha-D-ribose 1-diphosphate</text>
        <dbReference type="Rhea" id="RHEA:17973"/>
        <dbReference type="ChEBI" id="CHEBI:17368"/>
        <dbReference type="ChEBI" id="CHEBI:33019"/>
        <dbReference type="ChEBI" id="CHEBI:58017"/>
        <dbReference type="ChEBI" id="CHEBI:58053"/>
    </reaction>
    <physiologicalReaction direction="right-to-left" evidence="1">
        <dbReference type="Rhea" id="RHEA:17975"/>
    </physiologicalReaction>
</comment>
<comment type="cofactor">
    <cofactor evidence="1">
        <name>Mg(2+)</name>
        <dbReference type="ChEBI" id="CHEBI:18420"/>
    </cofactor>
</comment>
<comment type="pathway">
    <text evidence="1">Purine metabolism; GMP biosynthesis via salvage pathway; GMP from guanine: step 1/1.</text>
</comment>
<comment type="pathway">
    <text evidence="1">Purine metabolism; XMP biosynthesis via salvage pathway; XMP from xanthine: step 1/1.</text>
</comment>
<comment type="subunit">
    <text evidence="1">Homotetramer.</text>
</comment>
<comment type="subcellular location">
    <subcellularLocation>
        <location evidence="1">Cell inner membrane</location>
        <topology evidence="1">Peripheral membrane protein</topology>
    </subcellularLocation>
</comment>
<comment type="similarity">
    <text evidence="1">Belongs to the purine/pyrimidine phosphoribosyltransferase family. XGPT subfamily.</text>
</comment>
<accession>C3LQ49</accession>
<protein>
    <recommendedName>
        <fullName evidence="1">Xanthine-guanine phosphoribosyltransferase</fullName>
        <shortName evidence="1">XGPRT</shortName>
        <ecNumber evidence="1">2.4.2.-</ecNumber>
        <ecNumber evidence="1">2.4.2.22</ecNumber>
    </recommendedName>
    <alternativeName>
        <fullName evidence="1">Xanthine phosphoribosyltransferase</fullName>
    </alternativeName>
</protein>
<evidence type="ECO:0000255" key="1">
    <source>
        <dbReference type="HAMAP-Rule" id="MF_01903"/>
    </source>
</evidence>
<feature type="chain" id="PRO_1000188762" description="Xanthine-guanine phosphoribosyltransferase">
    <location>
        <begin position="1"/>
        <end position="154"/>
    </location>
</feature>
<feature type="binding site" evidence="1">
    <location>
        <begin position="37"/>
        <end position="38"/>
    </location>
    <ligand>
        <name>5-phospho-alpha-D-ribose 1-diphosphate</name>
        <dbReference type="ChEBI" id="CHEBI:58017"/>
    </ligand>
</feature>
<feature type="binding site" evidence="1">
    <location>
        <position position="69"/>
    </location>
    <ligand>
        <name>5-phospho-alpha-D-ribose 1-diphosphate</name>
        <dbReference type="ChEBI" id="CHEBI:58017"/>
    </ligand>
</feature>
<feature type="binding site" evidence="1">
    <location>
        <position position="69"/>
    </location>
    <ligand>
        <name>GMP</name>
        <dbReference type="ChEBI" id="CHEBI:58115"/>
    </ligand>
</feature>
<feature type="binding site" evidence="1">
    <location>
        <begin position="88"/>
        <end position="96"/>
    </location>
    <ligand>
        <name>5-phospho-alpha-D-ribose 1-diphosphate</name>
        <dbReference type="ChEBI" id="CHEBI:58017"/>
    </ligand>
</feature>
<feature type="binding site" evidence="1">
    <location>
        <position position="89"/>
    </location>
    <ligand>
        <name>Mg(2+)</name>
        <dbReference type="ChEBI" id="CHEBI:18420"/>
    </ligand>
</feature>
<feature type="binding site" evidence="1">
    <location>
        <begin position="92"/>
        <end position="96"/>
    </location>
    <ligand>
        <name>GMP</name>
        <dbReference type="ChEBI" id="CHEBI:58115"/>
    </ligand>
</feature>
<feature type="binding site" evidence="1">
    <location>
        <position position="92"/>
    </location>
    <ligand>
        <name>guanine</name>
        <dbReference type="ChEBI" id="CHEBI:16235"/>
    </ligand>
</feature>
<feature type="binding site" evidence="1">
    <location>
        <position position="92"/>
    </location>
    <ligand>
        <name>xanthine</name>
        <dbReference type="ChEBI" id="CHEBI:17712"/>
    </ligand>
</feature>
<feature type="binding site" evidence="1">
    <location>
        <begin position="134"/>
        <end position="135"/>
    </location>
    <ligand>
        <name>GMP</name>
        <dbReference type="ChEBI" id="CHEBI:58115"/>
    </ligand>
</feature>
<feature type="binding site" evidence="1">
    <location>
        <position position="135"/>
    </location>
    <ligand>
        <name>guanine</name>
        <dbReference type="ChEBI" id="CHEBI:16235"/>
    </ligand>
</feature>
<feature type="binding site" evidence="1">
    <location>
        <position position="135"/>
    </location>
    <ligand>
        <name>xanthine</name>
        <dbReference type="ChEBI" id="CHEBI:17712"/>
    </ligand>
</feature>
<reference key="1">
    <citation type="journal article" date="2008" name="PLoS ONE">
        <title>A recalibrated molecular clock and independent origins for the cholera pandemic clones.</title>
        <authorList>
            <person name="Feng L."/>
            <person name="Reeves P.R."/>
            <person name="Lan R."/>
            <person name="Ren Y."/>
            <person name="Gao C."/>
            <person name="Zhou Z."/>
            <person name="Ren Y."/>
            <person name="Cheng J."/>
            <person name="Wang W."/>
            <person name="Wang J."/>
            <person name="Qian W."/>
            <person name="Li D."/>
            <person name="Wang L."/>
        </authorList>
    </citation>
    <scope>NUCLEOTIDE SEQUENCE [LARGE SCALE GENOMIC DNA]</scope>
    <source>
        <strain>M66-2</strain>
    </source>
</reference>